<name>NUCS_BEUC1</name>
<protein>
    <recommendedName>
        <fullName evidence="1">Endonuclease NucS</fullName>
        <ecNumber evidence="1">3.1.-.-</ecNumber>
    </recommendedName>
</protein>
<organism>
    <name type="scientific">Beutenbergia cavernae (strain ATCC BAA-8 / DSM 12333 / CCUG 43141 / JCM 11478 / NBRC 16432 / NCIMB 13614 / HKI 0122)</name>
    <dbReference type="NCBI Taxonomy" id="471853"/>
    <lineage>
        <taxon>Bacteria</taxon>
        <taxon>Bacillati</taxon>
        <taxon>Actinomycetota</taxon>
        <taxon>Actinomycetes</taxon>
        <taxon>Micrococcales</taxon>
        <taxon>Beutenbergiaceae</taxon>
        <taxon>Beutenbergia</taxon>
    </lineage>
</organism>
<gene>
    <name evidence="1" type="primary">nucS</name>
    <name type="ordered locus">Bcav_1310</name>
</gene>
<evidence type="ECO:0000255" key="1">
    <source>
        <dbReference type="HAMAP-Rule" id="MF_00722"/>
    </source>
</evidence>
<keyword id="KW-0963">Cytoplasm</keyword>
<keyword id="KW-0238">DNA-binding</keyword>
<keyword id="KW-0255">Endonuclease</keyword>
<keyword id="KW-0378">Hydrolase</keyword>
<keyword id="KW-0540">Nuclease</keyword>
<keyword id="KW-1185">Reference proteome</keyword>
<accession>C5C1V1</accession>
<feature type="chain" id="PRO_1000212713" description="Endonuclease NucS">
    <location>
        <begin position="1"/>
        <end position="231"/>
    </location>
</feature>
<proteinExistence type="inferred from homology"/>
<sequence length="231" mass="25255">MRLVIARCSVDYTGRLTAHLPLATRLLLVKADSSVLVHSDGGSYKPLNWMSPPCTLRVAEPDDDDVGRGVREVWTVQNAKSDDRLVVRIHDVLSDSSHDLGVDPGLVKDGVEAHLQALLAEQIDLLGSGHVLVRREFPTAIGPVDILARSAAGETVAVEIKRRGDIDGVEQLTRYLELLGRDPLLAPVQGVFAAQEIKPQARVLAQDRGIRCLVLDYDAMRGLDDVDSRLF</sequence>
<dbReference type="EC" id="3.1.-.-" evidence="1"/>
<dbReference type="EMBL" id="CP001618">
    <property type="protein sequence ID" value="ACQ79569.1"/>
    <property type="molecule type" value="Genomic_DNA"/>
</dbReference>
<dbReference type="RefSeq" id="WP_015881809.1">
    <property type="nucleotide sequence ID" value="NC_012669.1"/>
</dbReference>
<dbReference type="SMR" id="C5C1V1"/>
<dbReference type="STRING" id="471853.Bcav_1310"/>
<dbReference type="KEGG" id="bcv:Bcav_1310"/>
<dbReference type="eggNOG" id="COG1637">
    <property type="taxonomic scope" value="Bacteria"/>
</dbReference>
<dbReference type="HOGENOM" id="CLU_069350_0_0_11"/>
<dbReference type="OrthoDB" id="3344925at2"/>
<dbReference type="Proteomes" id="UP000007962">
    <property type="component" value="Chromosome"/>
</dbReference>
<dbReference type="GO" id="GO:0005737">
    <property type="term" value="C:cytoplasm"/>
    <property type="evidence" value="ECO:0007669"/>
    <property type="project" value="UniProtKB-SubCell"/>
</dbReference>
<dbReference type="GO" id="GO:0003677">
    <property type="term" value="F:DNA binding"/>
    <property type="evidence" value="ECO:0007669"/>
    <property type="project" value="UniProtKB-KW"/>
</dbReference>
<dbReference type="GO" id="GO:0000014">
    <property type="term" value="F:single-stranded DNA endodeoxyribonuclease activity"/>
    <property type="evidence" value="ECO:0007669"/>
    <property type="project" value="UniProtKB-UniRule"/>
</dbReference>
<dbReference type="CDD" id="cd22341">
    <property type="entry name" value="NucS-like"/>
    <property type="match status" value="1"/>
</dbReference>
<dbReference type="Gene3D" id="2.70.180.20">
    <property type="match status" value="1"/>
</dbReference>
<dbReference type="Gene3D" id="3.40.1350.10">
    <property type="match status" value="1"/>
</dbReference>
<dbReference type="HAMAP" id="MF_00722">
    <property type="entry name" value="NucS"/>
    <property type="match status" value="1"/>
</dbReference>
<dbReference type="InterPro" id="IPR002793">
    <property type="entry name" value="Endonuclease_NucS"/>
</dbReference>
<dbReference type="InterPro" id="IPR048301">
    <property type="entry name" value="NucS_C"/>
</dbReference>
<dbReference type="InterPro" id="IPR048302">
    <property type="entry name" value="NucS_N"/>
</dbReference>
<dbReference type="InterPro" id="IPR049173">
    <property type="entry name" value="NucS_N_sf"/>
</dbReference>
<dbReference type="InterPro" id="IPR011856">
    <property type="entry name" value="tRNA_endonuc-like_dom_sf"/>
</dbReference>
<dbReference type="NCBIfam" id="NF002876">
    <property type="entry name" value="PRK03298.1"/>
    <property type="match status" value="1"/>
</dbReference>
<dbReference type="PANTHER" id="PTHR38814">
    <property type="entry name" value="ENDONUCLEASE NUCS"/>
    <property type="match status" value="1"/>
</dbReference>
<dbReference type="PANTHER" id="PTHR38814:SF1">
    <property type="entry name" value="ENDONUCLEASE NUCS"/>
    <property type="match status" value="1"/>
</dbReference>
<dbReference type="Pfam" id="PF01939">
    <property type="entry name" value="NucS_C"/>
    <property type="match status" value="1"/>
</dbReference>
<dbReference type="Pfam" id="PF21003">
    <property type="entry name" value="NucS_N"/>
    <property type="match status" value="1"/>
</dbReference>
<reference key="1">
    <citation type="journal article" date="2009" name="Stand. Genomic Sci.">
        <title>Complete genome sequence of Beutenbergia cavernae type strain (HKI 0122).</title>
        <authorList>
            <person name="Land M."/>
            <person name="Pukall R."/>
            <person name="Abt B."/>
            <person name="Goker M."/>
            <person name="Rohde M."/>
            <person name="Glavina Del Rio T."/>
            <person name="Tice H."/>
            <person name="Copeland A."/>
            <person name="Cheng J.F."/>
            <person name="Lucas S."/>
            <person name="Chen F."/>
            <person name="Nolan M."/>
            <person name="Bruce D."/>
            <person name="Goodwin L."/>
            <person name="Pitluck S."/>
            <person name="Ivanova N."/>
            <person name="Mavromatis K."/>
            <person name="Ovchinnikova G."/>
            <person name="Pati A."/>
            <person name="Chen A."/>
            <person name="Palaniappan K."/>
            <person name="Hauser L."/>
            <person name="Chang Y.J."/>
            <person name="Jefferies C.C."/>
            <person name="Saunders E."/>
            <person name="Brettin T."/>
            <person name="Detter J.C."/>
            <person name="Han C."/>
            <person name="Chain P."/>
            <person name="Bristow J."/>
            <person name="Eisen J.A."/>
            <person name="Markowitz V."/>
            <person name="Hugenholtz P."/>
            <person name="Kyrpides N.C."/>
            <person name="Klenk H.P."/>
            <person name="Lapidus A."/>
        </authorList>
    </citation>
    <scope>NUCLEOTIDE SEQUENCE [LARGE SCALE GENOMIC DNA]</scope>
    <source>
        <strain>ATCC BAA-8 / DSM 12333 / CCUG 43141 / JCM 11478 / NBRC 16432 / NCIMB 13614 / HKI 0122</strain>
    </source>
</reference>
<comment type="function">
    <text evidence="1">Cleaves both 3' and 5' ssDNA extremities of branched DNA structures.</text>
</comment>
<comment type="subcellular location">
    <subcellularLocation>
        <location evidence="1">Cytoplasm</location>
    </subcellularLocation>
</comment>
<comment type="similarity">
    <text evidence="1">Belongs to the NucS endonuclease family.</text>
</comment>